<sequence>MKTCQSSHLDSGVESDIQCRSGSGCVVKCSTERMESAAKRRLAANARERRRMQGLNTAFDRLRKVVPQWGQDKKLSKYETLQMALSYIMALTRILAEAERYSTEREWINLHCEHFHPESYHHYTGQKVATDSDPYAQRIFSYHPEHFQIAN</sequence>
<evidence type="ECO:0000250" key="1">
    <source>
        <dbReference type="UniProtKB" id="Q8N100"/>
    </source>
</evidence>
<evidence type="ECO:0000250" key="2">
    <source>
        <dbReference type="UniProtKB" id="Q9Z2E5"/>
    </source>
</evidence>
<evidence type="ECO:0000255" key="3">
    <source>
        <dbReference type="PROSITE-ProRule" id="PRU00981"/>
    </source>
</evidence>
<evidence type="ECO:0000269" key="4">
    <source>
    </source>
</evidence>
<evidence type="ECO:0000269" key="5">
    <source>
    </source>
</evidence>
<evidence type="ECO:0000269" key="6">
    <source>
    </source>
</evidence>
<evidence type="ECO:0000269" key="7">
    <source>
    </source>
</evidence>
<evidence type="ECO:0000269" key="8">
    <source>
    </source>
</evidence>
<evidence type="ECO:0000303" key="9">
    <source>
    </source>
</evidence>
<evidence type="ECO:0000303" key="10">
    <source>
    </source>
</evidence>
<evidence type="ECO:0000305" key="11"/>
<dbReference type="EMBL" id="AJ001178">
    <property type="protein sequence ID" value="CAA04572.1"/>
    <property type="molecule type" value="mRNA"/>
</dbReference>
<dbReference type="EMBL" id="AJ630209">
    <property type="protein sequence ID" value="CAF34420.1"/>
    <property type="molecule type" value="Genomic_DNA"/>
</dbReference>
<dbReference type="RefSeq" id="NP_989999.1">
    <property type="nucleotide sequence ID" value="NM_204668.1"/>
</dbReference>
<dbReference type="SMR" id="O57598"/>
<dbReference type="FunCoup" id="O57598">
    <property type="interactions" value="37"/>
</dbReference>
<dbReference type="STRING" id="9031.ENSGALP00000065463"/>
<dbReference type="PaxDb" id="9031-ENSGALP00000040088"/>
<dbReference type="Ensembl" id="ENSGALT00010055769.1">
    <property type="protein sequence ID" value="ENSGALP00010033767.1"/>
    <property type="gene ID" value="ENSGALG00010022922.1"/>
</dbReference>
<dbReference type="Ensembl" id="ENSGALT00010055773.1">
    <property type="protein sequence ID" value="ENSGALP00010033769.1"/>
    <property type="gene ID" value="ENSGALG00010022922.1"/>
</dbReference>
<dbReference type="Ensembl" id="ENSGALT00010055775.1">
    <property type="protein sequence ID" value="ENSGALP00010033770.1"/>
    <property type="gene ID" value="ENSGALG00010022922.1"/>
</dbReference>
<dbReference type="GeneID" id="395388"/>
<dbReference type="KEGG" id="gga:395388"/>
<dbReference type="CTD" id="220202"/>
<dbReference type="VEuPathDB" id="HostDB:geneid_395388"/>
<dbReference type="eggNOG" id="KOG4395">
    <property type="taxonomic scope" value="Eukaryota"/>
</dbReference>
<dbReference type="GeneTree" id="ENSGT00940000161556"/>
<dbReference type="HOGENOM" id="CLU_145503_0_0_1"/>
<dbReference type="InParanoid" id="O57598"/>
<dbReference type="OMA" id="WINLHCE"/>
<dbReference type="OrthoDB" id="6161578at2759"/>
<dbReference type="PhylomeDB" id="O57598"/>
<dbReference type="TreeFam" id="TF315153"/>
<dbReference type="PRO" id="PR:O57598"/>
<dbReference type="Proteomes" id="UP000000539">
    <property type="component" value="Chromosome 6"/>
</dbReference>
<dbReference type="GO" id="GO:0030424">
    <property type="term" value="C:axon"/>
    <property type="evidence" value="ECO:0000250"/>
    <property type="project" value="UniProtKB"/>
</dbReference>
<dbReference type="GO" id="GO:0005829">
    <property type="term" value="C:cytosol"/>
    <property type="evidence" value="ECO:0007669"/>
    <property type="project" value="Ensembl"/>
</dbReference>
<dbReference type="GO" id="GO:0005654">
    <property type="term" value="C:nucleoplasm"/>
    <property type="evidence" value="ECO:0007669"/>
    <property type="project" value="Ensembl"/>
</dbReference>
<dbReference type="GO" id="GO:0005634">
    <property type="term" value="C:nucleus"/>
    <property type="evidence" value="ECO:0000250"/>
    <property type="project" value="UniProtKB"/>
</dbReference>
<dbReference type="GO" id="GO:0043204">
    <property type="term" value="C:perikaryon"/>
    <property type="evidence" value="ECO:0000250"/>
    <property type="project" value="UniProtKB"/>
</dbReference>
<dbReference type="GO" id="GO:0000981">
    <property type="term" value="F:DNA-binding transcription factor activity, RNA polymerase II-specific"/>
    <property type="evidence" value="ECO:0000318"/>
    <property type="project" value="GO_Central"/>
</dbReference>
<dbReference type="GO" id="GO:0070888">
    <property type="term" value="F:E-box binding"/>
    <property type="evidence" value="ECO:0000318"/>
    <property type="project" value="GO_Central"/>
</dbReference>
<dbReference type="GO" id="GO:0046983">
    <property type="term" value="F:protein dimerization activity"/>
    <property type="evidence" value="ECO:0007669"/>
    <property type="project" value="InterPro"/>
</dbReference>
<dbReference type="GO" id="GO:0000976">
    <property type="term" value="F:transcription cis-regulatory region binding"/>
    <property type="evidence" value="ECO:0000250"/>
    <property type="project" value="UniProtKB"/>
</dbReference>
<dbReference type="GO" id="GO:0061564">
    <property type="term" value="P:axon development"/>
    <property type="evidence" value="ECO:0000318"/>
    <property type="project" value="GO_Central"/>
</dbReference>
<dbReference type="GO" id="GO:0007623">
    <property type="term" value="P:circadian rhythm"/>
    <property type="evidence" value="ECO:0007669"/>
    <property type="project" value="Ensembl"/>
</dbReference>
<dbReference type="GO" id="GO:0043153">
    <property type="term" value="P:entrainment of circadian clock by photoperiod"/>
    <property type="evidence" value="ECO:0007669"/>
    <property type="project" value="Ensembl"/>
</dbReference>
<dbReference type="GO" id="GO:0003407">
    <property type="term" value="P:neural retina development"/>
    <property type="evidence" value="ECO:0000315"/>
    <property type="project" value="AgBase"/>
</dbReference>
<dbReference type="GO" id="GO:0030182">
    <property type="term" value="P:neuron differentiation"/>
    <property type="evidence" value="ECO:0000315"/>
    <property type="project" value="AgBase"/>
</dbReference>
<dbReference type="GO" id="GO:0048663">
    <property type="term" value="P:neuron fate commitment"/>
    <property type="evidence" value="ECO:0000318"/>
    <property type="project" value="GO_Central"/>
</dbReference>
<dbReference type="GO" id="GO:0021554">
    <property type="term" value="P:optic nerve development"/>
    <property type="evidence" value="ECO:0007669"/>
    <property type="project" value="Ensembl"/>
</dbReference>
<dbReference type="GO" id="GO:1902336">
    <property type="term" value="P:positive regulation of retinal ganglion cell axon guidance"/>
    <property type="evidence" value="ECO:0000250"/>
    <property type="project" value="UniProtKB"/>
</dbReference>
<dbReference type="GO" id="GO:0045944">
    <property type="term" value="P:positive regulation of transcription by RNA polymerase II"/>
    <property type="evidence" value="ECO:0000318"/>
    <property type="project" value="GO_Central"/>
</dbReference>
<dbReference type="GO" id="GO:0006357">
    <property type="term" value="P:regulation of transcription by RNA polymerase II"/>
    <property type="evidence" value="ECO:0000250"/>
    <property type="project" value="UniProtKB"/>
</dbReference>
<dbReference type="GO" id="GO:0010996">
    <property type="term" value="P:response to auditory stimulus"/>
    <property type="evidence" value="ECO:0000250"/>
    <property type="project" value="UniProtKB"/>
</dbReference>
<dbReference type="GO" id="GO:0007423">
    <property type="term" value="P:sensory organ development"/>
    <property type="evidence" value="ECO:0000318"/>
    <property type="project" value="GO_Central"/>
</dbReference>
<dbReference type="CDD" id="cd19714">
    <property type="entry name" value="bHLH_TS_ATOH7"/>
    <property type="match status" value="1"/>
</dbReference>
<dbReference type="FunFam" id="4.10.280.10:FF:000025">
    <property type="entry name" value="protein atonal homolog 7"/>
    <property type="match status" value="1"/>
</dbReference>
<dbReference type="Gene3D" id="4.10.280.10">
    <property type="entry name" value="Helix-loop-helix DNA-binding domain"/>
    <property type="match status" value="1"/>
</dbReference>
<dbReference type="InterPro" id="IPR032663">
    <property type="entry name" value="ATOH7_bHLH"/>
</dbReference>
<dbReference type="InterPro" id="IPR011598">
    <property type="entry name" value="bHLH_dom"/>
</dbReference>
<dbReference type="InterPro" id="IPR050359">
    <property type="entry name" value="bHLH_transcription_factors"/>
</dbReference>
<dbReference type="InterPro" id="IPR036638">
    <property type="entry name" value="HLH_DNA-bd_sf"/>
</dbReference>
<dbReference type="PANTHER" id="PTHR19290">
    <property type="entry name" value="BASIC HELIX-LOOP-HELIX PROTEIN NEUROGENIN-RELATED"/>
    <property type="match status" value="1"/>
</dbReference>
<dbReference type="PANTHER" id="PTHR19290:SF99">
    <property type="entry name" value="TRANSCRIPTION FACTOR ATOH7"/>
    <property type="match status" value="1"/>
</dbReference>
<dbReference type="Pfam" id="PF00010">
    <property type="entry name" value="HLH"/>
    <property type="match status" value="1"/>
</dbReference>
<dbReference type="SMART" id="SM00353">
    <property type="entry name" value="HLH"/>
    <property type="match status" value="1"/>
</dbReference>
<dbReference type="SUPFAM" id="SSF47459">
    <property type="entry name" value="HLH, helix-loop-helix DNA-binding domain"/>
    <property type="match status" value="1"/>
</dbReference>
<dbReference type="PROSITE" id="PS50888">
    <property type="entry name" value="BHLH"/>
    <property type="match status" value="1"/>
</dbReference>
<reference key="1">
    <citation type="journal article" date="2001" name="Development">
        <title>Specification of neurotransmitter receptor identity in developing retina: the chick ATH5 promoter integrates the positive and negative effects of several bHLH proteins.</title>
        <authorList>
            <person name="Matter-Sadzinski L."/>
            <person name="Matter J.-M."/>
            <person name="Ong M.-T."/>
            <person name="Hernandez J."/>
            <person name="Ballivet M."/>
        </authorList>
    </citation>
    <scope>NUCLEOTIDE SEQUENCE [GENOMIC DNA / MRNA]</scope>
    <scope>DEVELOPMENTAL STAGE</scope>
    <scope>FUNCTION</scope>
    <source>
        <tissue>Blood</tissue>
        <tissue>Neuroretina</tissue>
    </source>
</reference>
<reference key="2">
    <citation type="journal article" date="2001" name="Proc. Natl. Acad. Sci. U.S.A.">
        <title>The Ath5 proneural genes function upstream of Brn3 POU domain transcription factor genes to promote retinal ganglion cell development.</title>
        <authorList>
            <person name="Liu W."/>
            <person name="Mo Z."/>
            <person name="Xiang M."/>
        </authorList>
    </citation>
    <scope>FUNCTION</scope>
    <scope>DEVELOPMENTAL STAGE</scope>
</reference>
<reference key="3">
    <citation type="journal article" date="2004" name="Development">
        <title>Highly specific interactions between bHLH transcription factors and chromatin during retina development.</title>
        <authorList>
            <person name="Skowronska-Krawczyk D."/>
            <person name="Ballivet M."/>
            <person name="Dynlacht B.D."/>
            <person name="Matter J.-M."/>
        </authorList>
    </citation>
    <scope>FUNCTION</scope>
    <scope>DNA-BINDING</scope>
</reference>
<reference key="4">
    <citation type="journal article" date="2005" name="Development">
        <title>A bHLH transcriptional network regulating the specification of retinal ganglion cells.</title>
        <authorList>
            <person name="Matter-Sadzinski L."/>
            <person name="Puzianowska-Kuznicka M."/>
            <person name="Hernandez J."/>
            <person name="Ballivet M."/>
            <person name="Matter J.-M."/>
        </authorList>
    </citation>
    <scope>INDUCTION</scope>
</reference>
<reference key="5">
    <citation type="journal article" date="2005" name="Mol. Cell. Biol.">
        <title>The basic domain of ATH5 mediates neuron-specific promoter activity during retina development.</title>
        <authorList>
            <person name="Skowronska-Krawczyk D."/>
            <person name="Matter-Sadzinski L."/>
            <person name="Ballivet M."/>
            <person name="Matter J.-M."/>
        </authorList>
    </citation>
    <scope>FUNCTION</scope>
</reference>
<organism>
    <name type="scientific">Gallus gallus</name>
    <name type="common">Chicken</name>
    <dbReference type="NCBI Taxonomy" id="9031"/>
    <lineage>
        <taxon>Eukaryota</taxon>
        <taxon>Metazoa</taxon>
        <taxon>Chordata</taxon>
        <taxon>Craniata</taxon>
        <taxon>Vertebrata</taxon>
        <taxon>Euteleostomi</taxon>
        <taxon>Archelosauria</taxon>
        <taxon>Archosauria</taxon>
        <taxon>Dinosauria</taxon>
        <taxon>Saurischia</taxon>
        <taxon>Theropoda</taxon>
        <taxon>Coelurosauria</taxon>
        <taxon>Aves</taxon>
        <taxon>Neognathae</taxon>
        <taxon>Galloanserae</taxon>
        <taxon>Galliformes</taxon>
        <taxon>Phasianidae</taxon>
        <taxon>Phasianinae</taxon>
        <taxon>Gallus</taxon>
    </lineage>
</organism>
<comment type="function">
    <text evidence="2 4 5 6 8">Transcription factor that binds to DNA at the consensus sequence 5'-CAG[GC]TG-3' (By similarity). Positively regulates the determination of retinal ganglion cell fate and formation of the optic nerve and retino-hypothalamic tract (PubMed:11124117, PubMed:15342472, PubMed:16260616). Required for retinal circadian rhythm photoentrainment (By similarity). Plays a role in brainstem auditory signaling and binaural processing (By similarity). During retinal neurogenesis, activates its own transcription, as well as the transcription of CHRNB3 and BRN3 (PubMed:11172005).</text>
</comment>
<comment type="subcellular location">
    <subcellularLocation>
        <location evidence="1">Nucleus</location>
    </subcellularLocation>
    <subcellularLocation>
        <location evidence="2">Perikaryon</location>
    </subcellularLocation>
    <subcellularLocation>
        <location evidence="2">Cell projection</location>
        <location evidence="2">Axon</location>
    </subcellularLocation>
</comment>
<comment type="developmental stage">
    <text evidence="4 5">Expressed in the developing retina, and in a tiny population of ventricular cells located in the ventral domain of the spinal cord and hindbrain. Retinal expression peaks at stage 29 (6 dpc).</text>
</comment>
<comment type="induction">
    <text evidence="7">Up-regulated by NGN2 and ATOH7. Down-regulated by HES1.</text>
</comment>
<comment type="domain">
    <text>The basic motif confers specificity for the CHRNB3 promoter.</text>
</comment>
<gene>
    <name evidence="2" type="primary">ATOH7</name>
    <name evidence="9" type="synonym">ATH5</name>
</gene>
<accession>O57598</accession>
<keyword id="KW-0966">Cell projection</keyword>
<keyword id="KW-0217">Developmental protein</keyword>
<keyword id="KW-0221">Differentiation</keyword>
<keyword id="KW-0238">DNA-binding</keyword>
<keyword id="KW-0524">Neurogenesis</keyword>
<keyword id="KW-0539">Nucleus</keyword>
<keyword id="KW-1185">Reference proteome</keyword>
<keyword id="KW-0804">Transcription</keyword>
<keyword id="KW-0805">Transcription regulation</keyword>
<feature type="initiator methionine" description="Removed" evidence="11">
    <location>
        <position position="1"/>
    </location>
</feature>
<feature type="chain" id="PRO_5000064266" description="Transcription factor ATOH7">
    <location>
        <begin position="2"/>
        <end position="151"/>
    </location>
</feature>
<feature type="domain" description="bHLH" evidence="3">
    <location>
        <begin position="39"/>
        <end position="91"/>
    </location>
</feature>
<feature type="site" description="Required for CHRNB3 transcription activation but not for DNA binding">
    <location>
        <begin position="42"/>
        <end position="43"/>
    </location>
</feature>
<feature type="site" description="Required for CHRNB3 transcription activation but not for DNA binding">
    <location>
        <position position="49"/>
    </location>
</feature>
<name>ATOH7_CHICK</name>
<protein>
    <recommendedName>
        <fullName evidence="11">Transcription factor ATOH7</fullName>
    </recommendedName>
    <alternativeName>
        <fullName evidence="1">Atonal bHLH transcription factor 7</fullName>
    </alternativeName>
    <alternativeName>
        <fullName evidence="10">Helix-loop-helix protein cATH-5</fullName>
        <shortName evidence="10">cATH5</shortName>
    </alternativeName>
    <alternativeName>
        <fullName evidence="9">Protein atonal homolog 5</fullName>
    </alternativeName>
    <alternativeName>
        <fullName evidence="1">Protein atonal homolog 7</fullName>
    </alternativeName>
</protein>
<proteinExistence type="evidence at protein level"/>